<protein>
    <recommendedName>
        <fullName evidence="1">Serine--tRNA ligase</fullName>
        <ecNumber evidence="1">6.1.1.11</ecNumber>
    </recommendedName>
    <alternativeName>
        <fullName evidence="1">Seryl-tRNA synthetase</fullName>
        <shortName evidence="1">SerRS</shortName>
    </alternativeName>
    <alternativeName>
        <fullName evidence="1">Seryl-tRNA(Ser/Sec) synthetase</fullName>
    </alternativeName>
</protein>
<proteinExistence type="inferred from homology"/>
<gene>
    <name evidence="1" type="primary">serS</name>
    <name type="ordered locus">ECUMN_1088</name>
</gene>
<feature type="chain" id="PRO_1000199479" description="Serine--tRNA ligase">
    <location>
        <begin position="1"/>
        <end position="430"/>
    </location>
</feature>
<feature type="binding site" evidence="1">
    <location>
        <begin position="237"/>
        <end position="239"/>
    </location>
    <ligand>
        <name>L-serine</name>
        <dbReference type="ChEBI" id="CHEBI:33384"/>
    </ligand>
</feature>
<feature type="binding site" evidence="1">
    <location>
        <begin position="268"/>
        <end position="270"/>
    </location>
    <ligand>
        <name>ATP</name>
        <dbReference type="ChEBI" id="CHEBI:30616"/>
    </ligand>
</feature>
<feature type="binding site" evidence="1">
    <location>
        <position position="291"/>
    </location>
    <ligand>
        <name>L-serine</name>
        <dbReference type="ChEBI" id="CHEBI:33384"/>
    </ligand>
</feature>
<feature type="binding site" evidence="1">
    <location>
        <begin position="355"/>
        <end position="358"/>
    </location>
    <ligand>
        <name>ATP</name>
        <dbReference type="ChEBI" id="CHEBI:30616"/>
    </ligand>
</feature>
<feature type="binding site" evidence="1">
    <location>
        <position position="391"/>
    </location>
    <ligand>
        <name>L-serine</name>
        <dbReference type="ChEBI" id="CHEBI:33384"/>
    </ligand>
</feature>
<accession>B7NAP4</accession>
<reference key="1">
    <citation type="journal article" date="2009" name="PLoS Genet.">
        <title>Organised genome dynamics in the Escherichia coli species results in highly diverse adaptive paths.</title>
        <authorList>
            <person name="Touchon M."/>
            <person name="Hoede C."/>
            <person name="Tenaillon O."/>
            <person name="Barbe V."/>
            <person name="Baeriswyl S."/>
            <person name="Bidet P."/>
            <person name="Bingen E."/>
            <person name="Bonacorsi S."/>
            <person name="Bouchier C."/>
            <person name="Bouvet O."/>
            <person name="Calteau A."/>
            <person name="Chiapello H."/>
            <person name="Clermont O."/>
            <person name="Cruveiller S."/>
            <person name="Danchin A."/>
            <person name="Diard M."/>
            <person name="Dossat C."/>
            <person name="Karoui M.E."/>
            <person name="Frapy E."/>
            <person name="Garry L."/>
            <person name="Ghigo J.M."/>
            <person name="Gilles A.M."/>
            <person name="Johnson J."/>
            <person name="Le Bouguenec C."/>
            <person name="Lescat M."/>
            <person name="Mangenot S."/>
            <person name="Martinez-Jehanne V."/>
            <person name="Matic I."/>
            <person name="Nassif X."/>
            <person name="Oztas S."/>
            <person name="Petit M.A."/>
            <person name="Pichon C."/>
            <person name="Rouy Z."/>
            <person name="Ruf C.S."/>
            <person name="Schneider D."/>
            <person name="Tourret J."/>
            <person name="Vacherie B."/>
            <person name="Vallenet D."/>
            <person name="Medigue C."/>
            <person name="Rocha E.P.C."/>
            <person name="Denamur E."/>
        </authorList>
    </citation>
    <scope>NUCLEOTIDE SEQUENCE [LARGE SCALE GENOMIC DNA]</scope>
    <source>
        <strain>UMN026 / ExPEC</strain>
    </source>
</reference>
<name>SYS_ECOLU</name>
<sequence>MLDPNLLRNEPDAVAEKLARRGFKLDVDKLGALEERRKVLQVKTENLQAERNSRSKSIGQAKARGEDIEPLRLEVNKLGEELDAAKAELDALQAEIRDIALTIPNLPADEVPVGKDENDNVEVSRWGTPREFDFEVRDHVTLGEMHSGLDFAAAVKLTGSRFVVMKGQIARMHRALSQFMLDLHTEQHGYSENYVPYLVNQDTLYGTGQLPKFAGDLFHTRPLEEEADTSNYALIPTAEVPLTNLVRGEIIDEDDLPIKMTAHTPCFRSEAGSYGRDTRGLIRMHQFDKVEMVQIVRPEDSMAALEEMTGHAEKVLQLLGLPYRKIILCTGDMGFGACKTYDLEVWIPAQNTYREISSCSNVWDFQARRMQARCRSKSDKKTRLVHTLNGSGLAVGRTLVAVMENYQQADGRIEVPEVLRPYMNGLEYIG</sequence>
<organism>
    <name type="scientific">Escherichia coli O17:K52:H18 (strain UMN026 / ExPEC)</name>
    <dbReference type="NCBI Taxonomy" id="585056"/>
    <lineage>
        <taxon>Bacteria</taxon>
        <taxon>Pseudomonadati</taxon>
        <taxon>Pseudomonadota</taxon>
        <taxon>Gammaproteobacteria</taxon>
        <taxon>Enterobacterales</taxon>
        <taxon>Enterobacteriaceae</taxon>
        <taxon>Escherichia</taxon>
    </lineage>
</organism>
<keyword id="KW-0030">Aminoacyl-tRNA synthetase</keyword>
<keyword id="KW-0067">ATP-binding</keyword>
<keyword id="KW-0963">Cytoplasm</keyword>
<keyword id="KW-0436">Ligase</keyword>
<keyword id="KW-0547">Nucleotide-binding</keyword>
<keyword id="KW-0648">Protein biosynthesis</keyword>
<comment type="function">
    <text evidence="1">Catalyzes the attachment of serine to tRNA(Ser). Is also able to aminoacylate tRNA(Sec) with serine, to form the misacylated tRNA L-seryl-tRNA(Sec), which will be further converted into selenocysteinyl-tRNA(Sec).</text>
</comment>
<comment type="catalytic activity">
    <reaction evidence="1">
        <text>tRNA(Ser) + L-serine + ATP = L-seryl-tRNA(Ser) + AMP + diphosphate + H(+)</text>
        <dbReference type="Rhea" id="RHEA:12292"/>
        <dbReference type="Rhea" id="RHEA-COMP:9669"/>
        <dbReference type="Rhea" id="RHEA-COMP:9703"/>
        <dbReference type="ChEBI" id="CHEBI:15378"/>
        <dbReference type="ChEBI" id="CHEBI:30616"/>
        <dbReference type="ChEBI" id="CHEBI:33019"/>
        <dbReference type="ChEBI" id="CHEBI:33384"/>
        <dbReference type="ChEBI" id="CHEBI:78442"/>
        <dbReference type="ChEBI" id="CHEBI:78533"/>
        <dbReference type="ChEBI" id="CHEBI:456215"/>
        <dbReference type="EC" id="6.1.1.11"/>
    </reaction>
</comment>
<comment type="catalytic activity">
    <reaction evidence="1">
        <text>tRNA(Sec) + L-serine + ATP = L-seryl-tRNA(Sec) + AMP + diphosphate + H(+)</text>
        <dbReference type="Rhea" id="RHEA:42580"/>
        <dbReference type="Rhea" id="RHEA-COMP:9742"/>
        <dbReference type="Rhea" id="RHEA-COMP:10128"/>
        <dbReference type="ChEBI" id="CHEBI:15378"/>
        <dbReference type="ChEBI" id="CHEBI:30616"/>
        <dbReference type="ChEBI" id="CHEBI:33019"/>
        <dbReference type="ChEBI" id="CHEBI:33384"/>
        <dbReference type="ChEBI" id="CHEBI:78442"/>
        <dbReference type="ChEBI" id="CHEBI:78533"/>
        <dbReference type="ChEBI" id="CHEBI:456215"/>
        <dbReference type="EC" id="6.1.1.11"/>
    </reaction>
</comment>
<comment type="pathway">
    <text evidence="1">Aminoacyl-tRNA biosynthesis; selenocysteinyl-tRNA(Sec) biosynthesis; L-seryl-tRNA(Sec) from L-serine and tRNA(Sec): step 1/1.</text>
</comment>
<comment type="subunit">
    <text evidence="1">Homodimer. The tRNA molecule binds across the dimer.</text>
</comment>
<comment type="subcellular location">
    <subcellularLocation>
        <location evidence="1">Cytoplasm</location>
    </subcellularLocation>
</comment>
<comment type="domain">
    <text evidence="1">Consists of two distinct domains, a catalytic core and a N-terminal extension that is involved in tRNA binding.</text>
</comment>
<comment type="similarity">
    <text evidence="1">Belongs to the class-II aminoacyl-tRNA synthetase family. Type-1 seryl-tRNA synthetase subfamily.</text>
</comment>
<evidence type="ECO:0000255" key="1">
    <source>
        <dbReference type="HAMAP-Rule" id="MF_00176"/>
    </source>
</evidence>
<dbReference type="EC" id="6.1.1.11" evidence="1"/>
<dbReference type="EMBL" id="CU928163">
    <property type="protein sequence ID" value="CAR12297.1"/>
    <property type="molecule type" value="Genomic_DNA"/>
</dbReference>
<dbReference type="RefSeq" id="WP_000886683.1">
    <property type="nucleotide sequence ID" value="NC_011751.1"/>
</dbReference>
<dbReference type="RefSeq" id="YP_002411841.1">
    <property type="nucleotide sequence ID" value="NC_011751.1"/>
</dbReference>
<dbReference type="SMR" id="B7NAP4"/>
<dbReference type="STRING" id="585056.ECUMN_1088"/>
<dbReference type="GeneID" id="93776527"/>
<dbReference type="KEGG" id="eum:ECUMN_1088"/>
<dbReference type="PATRIC" id="fig|585056.7.peg.1281"/>
<dbReference type="HOGENOM" id="CLU_023797_1_1_6"/>
<dbReference type="UniPathway" id="UPA00906">
    <property type="reaction ID" value="UER00895"/>
</dbReference>
<dbReference type="Proteomes" id="UP000007097">
    <property type="component" value="Chromosome"/>
</dbReference>
<dbReference type="GO" id="GO:0005737">
    <property type="term" value="C:cytoplasm"/>
    <property type="evidence" value="ECO:0007669"/>
    <property type="project" value="UniProtKB-SubCell"/>
</dbReference>
<dbReference type="GO" id="GO:0005524">
    <property type="term" value="F:ATP binding"/>
    <property type="evidence" value="ECO:0007669"/>
    <property type="project" value="UniProtKB-UniRule"/>
</dbReference>
<dbReference type="GO" id="GO:0004828">
    <property type="term" value="F:serine-tRNA ligase activity"/>
    <property type="evidence" value="ECO:0007669"/>
    <property type="project" value="UniProtKB-UniRule"/>
</dbReference>
<dbReference type="GO" id="GO:0016260">
    <property type="term" value="P:selenocysteine biosynthetic process"/>
    <property type="evidence" value="ECO:0007669"/>
    <property type="project" value="UniProtKB-UniRule"/>
</dbReference>
<dbReference type="GO" id="GO:0006434">
    <property type="term" value="P:seryl-tRNA aminoacylation"/>
    <property type="evidence" value="ECO:0007669"/>
    <property type="project" value="UniProtKB-UniRule"/>
</dbReference>
<dbReference type="CDD" id="cd00770">
    <property type="entry name" value="SerRS_core"/>
    <property type="match status" value="1"/>
</dbReference>
<dbReference type="FunFam" id="1.10.287.40:FF:000001">
    <property type="entry name" value="Serine--tRNA ligase"/>
    <property type="match status" value="1"/>
</dbReference>
<dbReference type="FunFam" id="3.30.930.10:FF:000018">
    <property type="entry name" value="Serine--tRNA ligase"/>
    <property type="match status" value="1"/>
</dbReference>
<dbReference type="Gene3D" id="3.30.930.10">
    <property type="entry name" value="Bira Bifunctional Protein, Domain 2"/>
    <property type="match status" value="1"/>
</dbReference>
<dbReference type="Gene3D" id="1.10.287.40">
    <property type="entry name" value="Serine-tRNA synthetase, tRNA binding domain"/>
    <property type="match status" value="1"/>
</dbReference>
<dbReference type="HAMAP" id="MF_00176">
    <property type="entry name" value="Ser_tRNA_synth_type1"/>
    <property type="match status" value="1"/>
</dbReference>
<dbReference type="InterPro" id="IPR002314">
    <property type="entry name" value="aa-tRNA-synt_IIb"/>
</dbReference>
<dbReference type="InterPro" id="IPR006195">
    <property type="entry name" value="aa-tRNA-synth_II"/>
</dbReference>
<dbReference type="InterPro" id="IPR045864">
    <property type="entry name" value="aa-tRNA-synth_II/BPL/LPL"/>
</dbReference>
<dbReference type="InterPro" id="IPR002317">
    <property type="entry name" value="Ser-tRNA-ligase_type_1"/>
</dbReference>
<dbReference type="InterPro" id="IPR015866">
    <property type="entry name" value="Ser-tRNA-synth_1_N"/>
</dbReference>
<dbReference type="InterPro" id="IPR042103">
    <property type="entry name" value="SerRS_1_N_sf"/>
</dbReference>
<dbReference type="InterPro" id="IPR033729">
    <property type="entry name" value="SerRS_core"/>
</dbReference>
<dbReference type="InterPro" id="IPR010978">
    <property type="entry name" value="tRNA-bd_arm"/>
</dbReference>
<dbReference type="NCBIfam" id="TIGR00414">
    <property type="entry name" value="serS"/>
    <property type="match status" value="1"/>
</dbReference>
<dbReference type="PANTHER" id="PTHR43697:SF1">
    <property type="entry name" value="SERINE--TRNA LIGASE"/>
    <property type="match status" value="1"/>
</dbReference>
<dbReference type="PANTHER" id="PTHR43697">
    <property type="entry name" value="SERYL-TRNA SYNTHETASE"/>
    <property type="match status" value="1"/>
</dbReference>
<dbReference type="Pfam" id="PF02403">
    <property type="entry name" value="Seryl_tRNA_N"/>
    <property type="match status" value="1"/>
</dbReference>
<dbReference type="Pfam" id="PF00587">
    <property type="entry name" value="tRNA-synt_2b"/>
    <property type="match status" value="1"/>
</dbReference>
<dbReference type="PIRSF" id="PIRSF001529">
    <property type="entry name" value="Ser-tRNA-synth_IIa"/>
    <property type="match status" value="1"/>
</dbReference>
<dbReference type="PRINTS" id="PR00981">
    <property type="entry name" value="TRNASYNTHSER"/>
</dbReference>
<dbReference type="SUPFAM" id="SSF55681">
    <property type="entry name" value="Class II aaRS and biotin synthetases"/>
    <property type="match status" value="1"/>
</dbReference>
<dbReference type="SUPFAM" id="SSF46589">
    <property type="entry name" value="tRNA-binding arm"/>
    <property type="match status" value="1"/>
</dbReference>
<dbReference type="PROSITE" id="PS50862">
    <property type="entry name" value="AA_TRNA_LIGASE_II"/>
    <property type="match status" value="1"/>
</dbReference>